<name>Y058_MYCBO</name>
<protein>
    <recommendedName>
        <fullName>Uncharacterized protein Mb0058</fullName>
    </recommendedName>
</protein>
<sequence>MPVVTAVGRRRGFAMPWVSTARSGAVMLANYSAGVCGRVSSPGLNVRKMCLKANTPGAVTWLDTPKRFLSTQTASRCMAVNSSDVVTGRIDPQVLHTPLNTDVDGYAHAMHSSINSGPLEYLPATFSVFPALGDVGDLGGGVGAATYALDRLSNMRSGACVGGGESPWRSLMT</sequence>
<reference key="1">
    <citation type="journal article" date="2003" name="Proc. Natl. Acad. Sci. U.S.A.">
        <title>The complete genome sequence of Mycobacterium bovis.</title>
        <authorList>
            <person name="Garnier T."/>
            <person name="Eiglmeier K."/>
            <person name="Camus J.-C."/>
            <person name="Medina N."/>
            <person name="Mansoor H."/>
            <person name="Pryor M."/>
            <person name="Duthoy S."/>
            <person name="Grondin S."/>
            <person name="Lacroix C."/>
            <person name="Monsempe C."/>
            <person name="Simon S."/>
            <person name="Harris B."/>
            <person name="Atkin R."/>
            <person name="Doggett J."/>
            <person name="Mayes R."/>
            <person name="Keating L."/>
            <person name="Wheeler P.R."/>
            <person name="Parkhill J."/>
            <person name="Barrell B.G."/>
            <person name="Cole S.T."/>
            <person name="Gordon S.V."/>
            <person name="Hewinson R.G."/>
        </authorList>
    </citation>
    <scope>NUCLEOTIDE SEQUENCE [LARGE SCALE GENOMIC DNA]</scope>
    <source>
        <strain>ATCC BAA-935 / AF2122/97</strain>
    </source>
</reference>
<reference key="2">
    <citation type="journal article" date="2017" name="Genome Announc.">
        <title>Updated reference genome sequence and annotation of Mycobacterium bovis AF2122/97.</title>
        <authorList>
            <person name="Malone K.M."/>
            <person name="Farrell D."/>
            <person name="Stuber T.P."/>
            <person name="Schubert O.T."/>
            <person name="Aebersold R."/>
            <person name="Robbe-Austerman S."/>
            <person name="Gordon S.V."/>
        </authorList>
    </citation>
    <scope>NUCLEOTIDE SEQUENCE [LARGE SCALE GENOMIC DNA]</scope>
    <scope>GENOME REANNOTATION</scope>
    <source>
        <strain>ATCC BAA-935 / AF2122/97</strain>
    </source>
</reference>
<gene>
    <name type="ordered locus">BQ2027_MB0058</name>
</gene>
<organism>
    <name type="scientific">Mycobacterium bovis (strain ATCC BAA-935 / AF2122/97)</name>
    <dbReference type="NCBI Taxonomy" id="233413"/>
    <lineage>
        <taxon>Bacteria</taxon>
        <taxon>Bacillati</taxon>
        <taxon>Actinomycetota</taxon>
        <taxon>Actinomycetes</taxon>
        <taxon>Mycobacteriales</taxon>
        <taxon>Mycobacteriaceae</taxon>
        <taxon>Mycobacterium</taxon>
        <taxon>Mycobacterium tuberculosis complex</taxon>
    </lineage>
</organism>
<evidence type="ECO:0000255" key="1"/>
<dbReference type="EMBL" id="LT708304">
    <property type="protein sequence ID" value="SIT98430.1"/>
    <property type="molecule type" value="Genomic_DNA"/>
</dbReference>
<dbReference type="RefSeq" id="NP_853727.1">
    <property type="nucleotide sequence ID" value="NC_002945.3"/>
</dbReference>
<dbReference type="RefSeq" id="WP_003900797.1">
    <property type="nucleotide sequence ID" value="NC_002945.4"/>
</dbReference>
<dbReference type="KEGG" id="mbo:BQ2027_MB0058"/>
<dbReference type="Proteomes" id="UP000001419">
    <property type="component" value="Chromosome"/>
</dbReference>
<accession>P64680</accession>
<accession>A0A1R3XWD1</accession>
<accession>P71714</accession>
<accession>X2BDW3</accession>
<feature type="signal peptide" evidence="1">
    <location>
        <begin position="1"/>
        <end position="25"/>
    </location>
</feature>
<feature type="chain" id="PRO_0000014067" description="Uncharacterized protein Mb0058">
    <location>
        <begin position="26"/>
        <end position="173"/>
    </location>
</feature>
<keyword id="KW-1185">Reference proteome</keyword>
<keyword id="KW-0732">Signal</keyword>
<proteinExistence type="inferred from homology"/>